<dbReference type="EMBL" id="CP000705">
    <property type="protein sequence ID" value="ABQ83442.1"/>
    <property type="molecule type" value="Genomic_DNA"/>
</dbReference>
<dbReference type="RefSeq" id="WP_011953504.1">
    <property type="nucleotide sequence ID" value="NC_009513.1"/>
</dbReference>
<dbReference type="SMR" id="A5VKR8"/>
<dbReference type="STRING" id="557436.Lreu_1185"/>
<dbReference type="KEGG" id="lre:Lreu_1185"/>
<dbReference type="eggNOG" id="COG0781">
    <property type="taxonomic scope" value="Bacteria"/>
</dbReference>
<dbReference type="HOGENOM" id="CLU_087843_3_2_9"/>
<dbReference type="Proteomes" id="UP000001991">
    <property type="component" value="Chromosome"/>
</dbReference>
<dbReference type="GO" id="GO:0005829">
    <property type="term" value="C:cytosol"/>
    <property type="evidence" value="ECO:0007669"/>
    <property type="project" value="TreeGrafter"/>
</dbReference>
<dbReference type="GO" id="GO:0003723">
    <property type="term" value="F:RNA binding"/>
    <property type="evidence" value="ECO:0007669"/>
    <property type="project" value="UniProtKB-UniRule"/>
</dbReference>
<dbReference type="GO" id="GO:0006353">
    <property type="term" value="P:DNA-templated transcription termination"/>
    <property type="evidence" value="ECO:0007669"/>
    <property type="project" value="UniProtKB-UniRule"/>
</dbReference>
<dbReference type="GO" id="GO:0031564">
    <property type="term" value="P:transcription antitermination"/>
    <property type="evidence" value="ECO:0007669"/>
    <property type="project" value="UniProtKB-KW"/>
</dbReference>
<dbReference type="Gene3D" id="1.10.940.10">
    <property type="entry name" value="NusB-like"/>
    <property type="match status" value="1"/>
</dbReference>
<dbReference type="HAMAP" id="MF_00073">
    <property type="entry name" value="NusB"/>
    <property type="match status" value="1"/>
</dbReference>
<dbReference type="InterPro" id="IPR035926">
    <property type="entry name" value="NusB-like_sf"/>
</dbReference>
<dbReference type="InterPro" id="IPR011605">
    <property type="entry name" value="NusB_fam"/>
</dbReference>
<dbReference type="InterPro" id="IPR006027">
    <property type="entry name" value="NusB_RsmB_TIM44"/>
</dbReference>
<dbReference type="NCBIfam" id="TIGR01951">
    <property type="entry name" value="nusB"/>
    <property type="match status" value="1"/>
</dbReference>
<dbReference type="NCBIfam" id="NF001223">
    <property type="entry name" value="PRK00202.1-1"/>
    <property type="match status" value="1"/>
</dbReference>
<dbReference type="PANTHER" id="PTHR11078:SF3">
    <property type="entry name" value="ANTITERMINATION NUSB DOMAIN-CONTAINING PROTEIN"/>
    <property type="match status" value="1"/>
</dbReference>
<dbReference type="PANTHER" id="PTHR11078">
    <property type="entry name" value="N UTILIZATION SUBSTANCE PROTEIN B-RELATED"/>
    <property type="match status" value="1"/>
</dbReference>
<dbReference type="Pfam" id="PF01029">
    <property type="entry name" value="NusB"/>
    <property type="match status" value="1"/>
</dbReference>
<dbReference type="SUPFAM" id="SSF48013">
    <property type="entry name" value="NusB-like"/>
    <property type="match status" value="1"/>
</dbReference>
<keyword id="KW-1185">Reference proteome</keyword>
<keyword id="KW-0694">RNA-binding</keyword>
<keyword id="KW-0804">Transcription</keyword>
<keyword id="KW-0889">Transcription antitermination</keyword>
<keyword id="KW-0805">Transcription regulation</keyword>
<comment type="function">
    <text evidence="1">Involved in transcription antitermination. Required for transcription of ribosomal RNA (rRNA) genes. Binds specifically to the boxA antiterminator sequence of the ribosomal RNA (rrn) operons.</text>
</comment>
<comment type="similarity">
    <text evidence="1">Belongs to the NusB family.</text>
</comment>
<gene>
    <name evidence="1" type="primary">nusB</name>
    <name type="ordered locus">Lreu_1185</name>
</gene>
<proteinExistence type="inferred from homology"/>
<sequence length="138" mass="15775">MSLNRHMIREEAFQVLFALQSDSEADIQTVYEAIPHHDEKQIPPYLLTLVNGVREHQDQLDEQINDLLASGWTINRLAKPDLVILRLALFEIQYAENVPTVVAINEALELTKTFSSDKSRKFINGALGKFEKQVNENN</sequence>
<protein>
    <recommendedName>
        <fullName evidence="1">Transcription antitermination protein NusB</fullName>
    </recommendedName>
    <alternativeName>
        <fullName evidence="1">Antitermination factor NusB</fullName>
    </alternativeName>
</protein>
<organism>
    <name type="scientific">Limosilactobacillus reuteri (strain DSM 20016)</name>
    <name type="common">Lactobacillus reuteri</name>
    <dbReference type="NCBI Taxonomy" id="557436"/>
    <lineage>
        <taxon>Bacteria</taxon>
        <taxon>Bacillati</taxon>
        <taxon>Bacillota</taxon>
        <taxon>Bacilli</taxon>
        <taxon>Lactobacillales</taxon>
        <taxon>Lactobacillaceae</taxon>
        <taxon>Limosilactobacillus</taxon>
    </lineage>
</organism>
<feature type="chain" id="PRO_1000057498" description="Transcription antitermination protein NusB">
    <location>
        <begin position="1"/>
        <end position="138"/>
    </location>
</feature>
<accession>A5VKR8</accession>
<evidence type="ECO:0000255" key="1">
    <source>
        <dbReference type="HAMAP-Rule" id="MF_00073"/>
    </source>
</evidence>
<name>NUSB_LIMRD</name>
<reference key="1">
    <citation type="journal article" date="2011" name="PLoS Genet.">
        <title>The evolution of host specialization in the vertebrate gut symbiont Lactobacillus reuteri.</title>
        <authorList>
            <person name="Frese S.A."/>
            <person name="Benson A.K."/>
            <person name="Tannock G.W."/>
            <person name="Loach D.M."/>
            <person name="Kim J."/>
            <person name="Zhang M."/>
            <person name="Oh P.L."/>
            <person name="Heng N.C."/>
            <person name="Patil P.B."/>
            <person name="Juge N."/>
            <person name="Mackenzie D.A."/>
            <person name="Pearson B.M."/>
            <person name="Lapidus A."/>
            <person name="Dalin E."/>
            <person name="Tice H."/>
            <person name="Goltsman E."/>
            <person name="Land M."/>
            <person name="Hauser L."/>
            <person name="Ivanova N."/>
            <person name="Kyrpides N.C."/>
            <person name="Walter J."/>
        </authorList>
    </citation>
    <scope>NUCLEOTIDE SEQUENCE [LARGE SCALE GENOMIC DNA]</scope>
    <source>
        <strain>DSM 20016</strain>
    </source>
</reference>